<gene>
    <name evidence="1" type="primary">ppk</name>
    <name type="ordered locus">NMB1900</name>
</gene>
<accession>Q9JXS9</accession>
<accession>Q59616</accession>
<dbReference type="EC" id="2.7.4.1" evidence="1"/>
<dbReference type="EMBL" id="AE002098">
    <property type="protein sequence ID" value="AAF42231.1"/>
    <property type="status" value="ALT_INIT"/>
    <property type="molecule type" value="Genomic_DNA"/>
</dbReference>
<dbReference type="EMBL" id="U16262">
    <property type="protein sequence ID" value="AAA85674.1"/>
    <property type="molecule type" value="Genomic_DNA"/>
</dbReference>
<dbReference type="EMBL" id="AF037931">
    <property type="protein sequence ID" value="AAC08915.1"/>
    <property type="molecule type" value="Genomic_DNA"/>
</dbReference>
<dbReference type="PIR" id="B81030">
    <property type="entry name" value="B81030"/>
</dbReference>
<dbReference type="RefSeq" id="NP_274895.1">
    <property type="nucleotide sequence ID" value="NC_003112.2"/>
</dbReference>
<dbReference type="SMR" id="Q9JXS9"/>
<dbReference type="FunCoup" id="Q9JXS9">
    <property type="interactions" value="241"/>
</dbReference>
<dbReference type="STRING" id="122586.NMB1900"/>
<dbReference type="PaxDb" id="122586-NMB1900"/>
<dbReference type="KEGG" id="nme:NMB1900"/>
<dbReference type="PATRIC" id="fig|122586.8.peg.2425"/>
<dbReference type="HOGENOM" id="CLU_009678_5_0_4"/>
<dbReference type="InParanoid" id="Q9JXS9"/>
<dbReference type="OrthoDB" id="9761456at2"/>
<dbReference type="Proteomes" id="UP000000425">
    <property type="component" value="Chromosome"/>
</dbReference>
<dbReference type="GO" id="GO:0016020">
    <property type="term" value="C:membrane"/>
    <property type="evidence" value="ECO:0000318"/>
    <property type="project" value="GO_Central"/>
</dbReference>
<dbReference type="GO" id="GO:0009358">
    <property type="term" value="C:polyphosphate kinase complex"/>
    <property type="evidence" value="ECO:0007669"/>
    <property type="project" value="InterPro"/>
</dbReference>
<dbReference type="GO" id="GO:0005524">
    <property type="term" value="F:ATP binding"/>
    <property type="evidence" value="ECO:0007669"/>
    <property type="project" value="UniProtKB-KW"/>
</dbReference>
<dbReference type="GO" id="GO:0046872">
    <property type="term" value="F:metal ion binding"/>
    <property type="evidence" value="ECO:0007669"/>
    <property type="project" value="UniProtKB-KW"/>
</dbReference>
<dbReference type="GO" id="GO:0008976">
    <property type="term" value="F:polyphosphate kinase activity"/>
    <property type="evidence" value="ECO:0000318"/>
    <property type="project" value="GO_Central"/>
</dbReference>
<dbReference type="GO" id="GO:0006799">
    <property type="term" value="P:polyphosphate biosynthetic process"/>
    <property type="evidence" value="ECO:0000318"/>
    <property type="project" value="GO_Central"/>
</dbReference>
<dbReference type="CDD" id="cd09165">
    <property type="entry name" value="PLDc_PaPPK1_C1_like"/>
    <property type="match status" value="1"/>
</dbReference>
<dbReference type="CDD" id="cd09168">
    <property type="entry name" value="PLDc_PaPPK1_C2_like"/>
    <property type="match status" value="1"/>
</dbReference>
<dbReference type="Gene3D" id="3.30.870.10">
    <property type="entry name" value="Endonuclease Chain A"/>
    <property type="match status" value="2"/>
</dbReference>
<dbReference type="Gene3D" id="3.30.1840.10">
    <property type="entry name" value="Polyphosphate kinase middle domain"/>
    <property type="match status" value="1"/>
</dbReference>
<dbReference type="Gene3D" id="1.20.58.310">
    <property type="entry name" value="Polyphosphate kinase N-terminal domain"/>
    <property type="match status" value="1"/>
</dbReference>
<dbReference type="HAMAP" id="MF_00347">
    <property type="entry name" value="Polyphosphate_kinase"/>
    <property type="match status" value="1"/>
</dbReference>
<dbReference type="InterPro" id="IPR003414">
    <property type="entry name" value="PP_kinase"/>
</dbReference>
<dbReference type="InterPro" id="IPR041108">
    <property type="entry name" value="PP_kinase_C_1"/>
</dbReference>
<dbReference type="InterPro" id="IPR024953">
    <property type="entry name" value="PP_kinase_middle"/>
</dbReference>
<dbReference type="InterPro" id="IPR036830">
    <property type="entry name" value="PP_kinase_middle_dom_sf"/>
</dbReference>
<dbReference type="InterPro" id="IPR025200">
    <property type="entry name" value="PPK_C_dom2"/>
</dbReference>
<dbReference type="InterPro" id="IPR025198">
    <property type="entry name" value="PPK_N_dom"/>
</dbReference>
<dbReference type="InterPro" id="IPR036832">
    <property type="entry name" value="PPK_N_dom_sf"/>
</dbReference>
<dbReference type="NCBIfam" id="TIGR03705">
    <property type="entry name" value="poly_P_kin"/>
    <property type="match status" value="1"/>
</dbReference>
<dbReference type="NCBIfam" id="NF003917">
    <property type="entry name" value="PRK05443.1-1"/>
    <property type="match status" value="1"/>
</dbReference>
<dbReference type="NCBIfam" id="NF003918">
    <property type="entry name" value="PRK05443.1-2"/>
    <property type="match status" value="1"/>
</dbReference>
<dbReference type="NCBIfam" id="NF003921">
    <property type="entry name" value="PRK05443.2-2"/>
    <property type="match status" value="1"/>
</dbReference>
<dbReference type="PANTHER" id="PTHR30218">
    <property type="entry name" value="POLYPHOSPHATE KINASE"/>
    <property type="match status" value="1"/>
</dbReference>
<dbReference type="PANTHER" id="PTHR30218:SF0">
    <property type="entry name" value="POLYPHOSPHATE KINASE"/>
    <property type="match status" value="1"/>
</dbReference>
<dbReference type="Pfam" id="PF02503">
    <property type="entry name" value="PP_kinase"/>
    <property type="match status" value="1"/>
</dbReference>
<dbReference type="Pfam" id="PF13090">
    <property type="entry name" value="PP_kinase_C"/>
    <property type="match status" value="1"/>
</dbReference>
<dbReference type="Pfam" id="PF17941">
    <property type="entry name" value="PP_kinase_C_1"/>
    <property type="match status" value="1"/>
</dbReference>
<dbReference type="Pfam" id="PF13089">
    <property type="entry name" value="PP_kinase_N"/>
    <property type="match status" value="1"/>
</dbReference>
<dbReference type="PIRSF" id="PIRSF015589">
    <property type="entry name" value="PP_kinase"/>
    <property type="match status" value="1"/>
</dbReference>
<dbReference type="SUPFAM" id="SSF56024">
    <property type="entry name" value="Phospholipase D/nuclease"/>
    <property type="match status" value="2"/>
</dbReference>
<dbReference type="SUPFAM" id="SSF143724">
    <property type="entry name" value="PHP14-like"/>
    <property type="match status" value="1"/>
</dbReference>
<dbReference type="SUPFAM" id="SSF140356">
    <property type="entry name" value="PPK N-terminal domain-like"/>
    <property type="match status" value="1"/>
</dbReference>
<sequence>MPEQNRILCRELSLLAFNRRVLAQAEDQNVPLLERLRFLCIVSSNLDEFFEVRMAWLKREHKRCPQRRLDNGKMPSETIADVTEAARSLIRHQYDLFNNVLQPELAQEGIHFYRRRNWTDTQKKWIEDYFDRELLPILTPIGLDPSHPFPRPLNKSLNFAVELDGTDAFGRPSGMAIVQAPRILPRVVPLPSELCGGGHGFVFLSSILHAHVGKLFPGMNVKGCHQFRLTRDSDLTVDEEDLQNLRAAIQNELHDREYGDGVRLEVADTCPAYIRDFLLAQFKLTAAELYQVKGPVNLVRLNAVPDLVNRPDLKFPTHTPGRLKALGKTASIFDLVRQSPILLHHPYQSFDPVVEMMREAAADPAVLAVKMTIYRTGTRSELVRALMKAALAGKQVTVVVELMARFDEANNVNWAKQLEEAGAHVVYGVFGYKVHAKMALVIRREDGVLKRYAHLGTGNYHQGTSRIYTDFGLITADEQITADVNILFMEITGLGKPGRLNKLYQSPFTLHKMVIDRIARETEHAKAGKPARITAKMNSLIEPTVIEALYRASAAGVQIDLIVRGMCTLRPGVKGLSENIRVRSIVGRQLEHARVYYFHNNGTDDTFISSADWMGRNFFRRIETATPITAPELKKRVIHEGLTMALDDNTHAWLMQPDGGYIRAAPAEGESEADLQNDLWTLLGG</sequence>
<reference key="1">
    <citation type="journal article" date="2000" name="Science">
        <title>Complete genome sequence of Neisseria meningitidis serogroup B strain MC58.</title>
        <authorList>
            <person name="Tettelin H."/>
            <person name="Saunders N.J."/>
            <person name="Heidelberg J.F."/>
            <person name="Jeffries A.C."/>
            <person name="Nelson K.E."/>
            <person name="Eisen J.A."/>
            <person name="Ketchum K.A."/>
            <person name="Hood D.W."/>
            <person name="Peden J.F."/>
            <person name="Dodson R.J."/>
            <person name="Nelson W.C."/>
            <person name="Gwinn M.L."/>
            <person name="DeBoy R.T."/>
            <person name="Peterson J.D."/>
            <person name="Hickey E.K."/>
            <person name="Haft D.H."/>
            <person name="Salzberg S.L."/>
            <person name="White O."/>
            <person name="Fleischmann R.D."/>
            <person name="Dougherty B.A."/>
            <person name="Mason T.M."/>
            <person name="Ciecko A."/>
            <person name="Parksey D.S."/>
            <person name="Blair E."/>
            <person name="Cittone H."/>
            <person name="Clark E.B."/>
            <person name="Cotton M.D."/>
            <person name="Utterback T.R."/>
            <person name="Khouri H.M."/>
            <person name="Qin H."/>
            <person name="Vamathevan J.J."/>
            <person name="Gill J."/>
            <person name="Scarlato V."/>
            <person name="Masignani V."/>
            <person name="Pizza M."/>
            <person name="Grandi G."/>
            <person name="Sun L."/>
            <person name="Smith H.O."/>
            <person name="Fraser C.M."/>
            <person name="Moxon E.R."/>
            <person name="Rappuoli R."/>
            <person name="Venter J.C."/>
        </authorList>
    </citation>
    <scope>NUCLEOTIDE SEQUENCE [LARGE SCALE GENOMIC DNA]</scope>
    <source>
        <strain>ATCC BAA-335 / MC58</strain>
    </source>
</reference>
<reference key="2">
    <citation type="journal article" date="1995" name="Infect. Immun.">
        <title>Cloning and characterization of the meningococcal polyphosphate kinase gene: production of polyphosphate synthesis mutants.</title>
        <authorList>
            <person name="Tinsley C.R."/>
            <person name="Gotschlich E.C."/>
        </authorList>
    </citation>
    <scope>NUCLEOTIDE SEQUENCE [GENOMIC DNA]</scope>
    <source>
        <strain>BNCV / Serogroup B</strain>
    </source>
</reference>
<reference key="3">
    <citation type="journal article" date="1998" name="Proc. Natl. Acad. Sci. U.S.A.">
        <title>Multilocus sequence typing: a portable approach to the identification of clones within populations of pathogenic microorganisms.</title>
        <authorList>
            <person name="Maiden M.C.J."/>
            <person name="Bygraves J.A."/>
            <person name="Feil E."/>
            <person name="Morelli G."/>
            <person name="Russell J.E."/>
            <person name="Urwin R."/>
            <person name="Zhang Q."/>
            <person name="Zhou J."/>
            <person name="Zurth K."/>
            <person name="Caugant D.A."/>
            <person name="Feavers I.M."/>
            <person name="Achtman M."/>
            <person name="Spratt B.G."/>
        </authorList>
    </citation>
    <scope>NUCLEOTIDE SEQUENCE [GENOMIC DNA] OF 16-208</scope>
</reference>
<organism>
    <name type="scientific">Neisseria meningitidis serogroup B (strain ATCC BAA-335 / MC58)</name>
    <dbReference type="NCBI Taxonomy" id="122586"/>
    <lineage>
        <taxon>Bacteria</taxon>
        <taxon>Pseudomonadati</taxon>
        <taxon>Pseudomonadota</taxon>
        <taxon>Betaproteobacteria</taxon>
        <taxon>Neisseriales</taxon>
        <taxon>Neisseriaceae</taxon>
        <taxon>Neisseria</taxon>
    </lineage>
</organism>
<proteinExistence type="inferred from homology"/>
<protein>
    <recommendedName>
        <fullName evidence="1">Polyphosphate kinase</fullName>
        <ecNumber evidence="1">2.7.4.1</ecNumber>
    </recommendedName>
    <alternativeName>
        <fullName evidence="1">ATP-polyphosphate phosphotransferase</fullName>
    </alternativeName>
    <alternativeName>
        <fullName evidence="1">Polyphosphoric acid kinase</fullName>
    </alternativeName>
</protein>
<keyword id="KW-0067">ATP-binding</keyword>
<keyword id="KW-0418">Kinase</keyword>
<keyword id="KW-0460">Magnesium</keyword>
<keyword id="KW-0479">Metal-binding</keyword>
<keyword id="KW-0547">Nucleotide-binding</keyword>
<keyword id="KW-0597">Phosphoprotein</keyword>
<keyword id="KW-1185">Reference proteome</keyword>
<keyword id="KW-0808">Transferase</keyword>
<name>PPK1_NEIMB</name>
<feature type="chain" id="PRO_0000128651" description="Polyphosphate kinase">
    <location>
        <begin position="1"/>
        <end position="685"/>
    </location>
</feature>
<feature type="active site" description="Phosphohistidine intermediate" evidence="1">
    <location>
        <position position="435"/>
    </location>
</feature>
<feature type="binding site" evidence="1">
    <location>
        <position position="45"/>
    </location>
    <ligand>
        <name>ATP</name>
        <dbReference type="ChEBI" id="CHEBI:30616"/>
    </ligand>
</feature>
<feature type="binding site" evidence="1">
    <location>
        <position position="375"/>
    </location>
    <ligand>
        <name>Mg(2+)</name>
        <dbReference type="ChEBI" id="CHEBI:18420"/>
    </ligand>
</feature>
<feature type="binding site" evidence="1">
    <location>
        <position position="405"/>
    </location>
    <ligand>
        <name>Mg(2+)</name>
        <dbReference type="ChEBI" id="CHEBI:18420"/>
    </ligand>
</feature>
<feature type="binding site" evidence="1">
    <location>
        <position position="468"/>
    </location>
    <ligand>
        <name>ATP</name>
        <dbReference type="ChEBI" id="CHEBI:30616"/>
    </ligand>
</feature>
<feature type="binding site" evidence="1">
    <location>
        <position position="564"/>
    </location>
    <ligand>
        <name>ATP</name>
        <dbReference type="ChEBI" id="CHEBI:30616"/>
    </ligand>
</feature>
<feature type="binding site" evidence="1">
    <location>
        <position position="592"/>
    </location>
    <ligand>
        <name>ATP</name>
        <dbReference type="ChEBI" id="CHEBI:30616"/>
    </ligand>
</feature>
<feature type="sequence conflict" description="In Ref. 2; AAA85674." evidence="2" ref="2">
    <original>Q</original>
    <variation>K</variation>
    <location>
        <position position="28"/>
    </location>
</feature>
<feature type="sequence conflict" description="In Ref. 2; AAA85674." evidence="2" ref="2">
    <original>HKRCPQ</original>
    <variation>NKLHPR</variation>
    <location>
        <begin position="61"/>
        <end position="66"/>
    </location>
</feature>
<feature type="sequence conflict" description="In Ref. 2; AAA85674." evidence="2" ref="2">
    <original>QEG</original>
    <variation>RES</variation>
    <location>
        <begin position="107"/>
        <end position="109"/>
    </location>
</feature>
<feature type="sequence conflict" description="In Ref. 2; AAA85674." evidence="2" ref="2">
    <original>D</original>
    <variation>G</variation>
    <location>
        <position position="120"/>
    </location>
</feature>
<feature type="sequence conflict" description="In Ref. 2; AAA85674." evidence="2" ref="2">
    <original>A</original>
    <variation>R</variation>
    <location>
        <position position="360"/>
    </location>
</feature>
<feature type="sequence conflict" description="In Ref. 2; AAA85674." evidence="2" ref="2">
    <original>A</original>
    <variation>D</variation>
    <location>
        <position position="365"/>
    </location>
</feature>
<feature type="sequence conflict" description="In Ref. 2; AAA85674." evidence="2" ref="2">
    <original>L</original>
    <variation>I</variation>
    <location>
        <position position="473"/>
    </location>
</feature>
<feature type="sequence conflict" description="In Ref. 2; AAA85674." evidence="2" ref="2">
    <original>I</original>
    <variation>T</variation>
    <location>
        <position position="486"/>
    </location>
</feature>
<feature type="sequence conflict" description="In Ref. 2; AAA85674." evidence="2" ref="2">
    <original>V</original>
    <variation>I</variation>
    <location>
        <position position="586"/>
    </location>
</feature>
<feature type="sequence conflict" description="In Ref. 2; AAA85674." evidence="2" ref="2">
    <original>Y</original>
    <variation>C</variation>
    <location>
        <position position="597"/>
    </location>
</feature>
<feature type="sequence conflict" description="In Ref. 2; AAA85674." evidence="2" ref="2">
    <original>T</original>
    <variation>A</variation>
    <location>
        <position position="603"/>
    </location>
</feature>
<feature type="sequence conflict" description="In Ref. 2; AAA85674." evidence="2" ref="2">
    <original>T</original>
    <variation>A</variation>
    <location>
        <position position="626"/>
    </location>
</feature>
<feature type="sequence conflict" description="In Ref. 2; AAA85674." evidence="2" ref="2">
    <original>T</original>
    <variation>A</variation>
    <location>
        <position position="629"/>
    </location>
</feature>
<feature type="sequence conflict" description="In Ref. 2; AAA85674." evidence="2" ref="2">
    <original>H</original>
    <variation>R</variation>
    <location>
        <position position="639"/>
    </location>
</feature>
<feature type="sequence conflict" description="In Ref. 2; AAA85674." evidence="2" ref="2">
    <original>T</original>
    <variation>E</variation>
    <location>
        <position position="643"/>
    </location>
</feature>
<feature type="sequence conflict" description="In Ref. 2; AAA85674." evidence="2" ref="2">
    <original>D</original>
    <variation>A</variation>
    <location>
        <position position="647"/>
    </location>
</feature>
<evidence type="ECO:0000255" key="1">
    <source>
        <dbReference type="HAMAP-Rule" id="MF_00347"/>
    </source>
</evidence>
<evidence type="ECO:0000305" key="2"/>
<comment type="function">
    <text evidence="1">Catalyzes the reversible transfer of the terminal phosphate of ATP to form a long-chain polyphosphate (polyP).</text>
</comment>
<comment type="catalytic activity">
    <reaction evidence="1">
        <text>[phosphate](n) + ATP = [phosphate](n+1) + ADP</text>
        <dbReference type="Rhea" id="RHEA:19573"/>
        <dbReference type="Rhea" id="RHEA-COMP:9859"/>
        <dbReference type="Rhea" id="RHEA-COMP:14280"/>
        <dbReference type="ChEBI" id="CHEBI:16838"/>
        <dbReference type="ChEBI" id="CHEBI:30616"/>
        <dbReference type="ChEBI" id="CHEBI:456216"/>
        <dbReference type="EC" id="2.7.4.1"/>
    </reaction>
</comment>
<comment type="cofactor">
    <cofactor evidence="1">
        <name>Mg(2+)</name>
        <dbReference type="ChEBI" id="CHEBI:18420"/>
    </cofactor>
</comment>
<comment type="PTM">
    <text evidence="1">An intermediate of this reaction is the autophosphorylated ppk in which a phosphate is covalently linked to a histidine residue through a N-P bond.</text>
</comment>
<comment type="similarity">
    <text evidence="1">Belongs to the polyphosphate kinase 1 (PPK1) family.</text>
</comment>
<comment type="sequence caution" evidence="2">
    <conflict type="erroneous initiation">
        <sequence resource="EMBL-CDS" id="AAF42231"/>
    </conflict>
</comment>